<dbReference type="EMBL" id="CP000100">
    <property type="protein sequence ID" value="ABB56044.1"/>
    <property type="molecule type" value="Genomic_DNA"/>
</dbReference>
<dbReference type="RefSeq" id="WP_011377401.1">
    <property type="nucleotide sequence ID" value="NZ_JACJTX010000002.1"/>
</dbReference>
<dbReference type="SMR" id="Q31SC5"/>
<dbReference type="STRING" id="1140.Synpcc7942_0012"/>
<dbReference type="PaxDb" id="1140-Synpcc7942_0012"/>
<dbReference type="GeneID" id="72428820"/>
<dbReference type="KEGG" id="syf:Synpcc7942_0012"/>
<dbReference type="eggNOG" id="COG0360">
    <property type="taxonomic scope" value="Bacteria"/>
</dbReference>
<dbReference type="HOGENOM" id="CLU_113441_4_2_3"/>
<dbReference type="OrthoDB" id="9812702at2"/>
<dbReference type="BioCyc" id="SYNEL:SYNPCC7942_0012-MONOMER"/>
<dbReference type="Proteomes" id="UP000889800">
    <property type="component" value="Chromosome"/>
</dbReference>
<dbReference type="GO" id="GO:0005737">
    <property type="term" value="C:cytoplasm"/>
    <property type="evidence" value="ECO:0007669"/>
    <property type="project" value="UniProtKB-ARBA"/>
</dbReference>
<dbReference type="GO" id="GO:1990904">
    <property type="term" value="C:ribonucleoprotein complex"/>
    <property type="evidence" value="ECO:0007669"/>
    <property type="project" value="UniProtKB-KW"/>
</dbReference>
<dbReference type="GO" id="GO:0005840">
    <property type="term" value="C:ribosome"/>
    <property type="evidence" value="ECO:0007669"/>
    <property type="project" value="UniProtKB-KW"/>
</dbReference>
<dbReference type="GO" id="GO:0070181">
    <property type="term" value="F:small ribosomal subunit rRNA binding"/>
    <property type="evidence" value="ECO:0007669"/>
    <property type="project" value="TreeGrafter"/>
</dbReference>
<dbReference type="GO" id="GO:0003735">
    <property type="term" value="F:structural constituent of ribosome"/>
    <property type="evidence" value="ECO:0007669"/>
    <property type="project" value="InterPro"/>
</dbReference>
<dbReference type="GO" id="GO:0006412">
    <property type="term" value="P:translation"/>
    <property type="evidence" value="ECO:0007669"/>
    <property type="project" value="UniProtKB-UniRule"/>
</dbReference>
<dbReference type="CDD" id="cd15487">
    <property type="entry name" value="bS6_chloro_cyano"/>
    <property type="match status" value="1"/>
</dbReference>
<dbReference type="Gene3D" id="3.30.70.60">
    <property type="match status" value="1"/>
</dbReference>
<dbReference type="HAMAP" id="MF_00360">
    <property type="entry name" value="Ribosomal_bS6"/>
    <property type="match status" value="1"/>
</dbReference>
<dbReference type="InterPro" id="IPR000529">
    <property type="entry name" value="Ribosomal_bS6"/>
</dbReference>
<dbReference type="InterPro" id="IPR020815">
    <property type="entry name" value="Ribosomal_bS6_CS"/>
</dbReference>
<dbReference type="InterPro" id="IPR035980">
    <property type="entry name" value="Ribosomal_bS6_sf"/>
</dbReference>
<dbReference type="InterPro" id="IPR020814">
    <property type="entry name" value="Ribosomal_S6_plastid/chlpt"/>
</dbReference>
<dbReference type="InterPro" id="IPR014717">
    <property type="entry name" value="Transl_elong_EF1B/ribsomal_bS6"/>
</dbReference>
<dbReference type="NCBIfam" id="TIGR00166">
    <property type="entry name" value="S6"/>
    <property type="match status" value="1"/>
</dbReference>
<dbReference type="PANTHER" id="PTHR21011">
    <property type="entry name" value="MITOCHONDRIAL 28S RIBOSOMAL PROTEIN S6"/>
    <property type="match status" value="1"/>
</dbReference>
<dbReference type="PANTHER" id="PTHR21011:SF1">
    <property type="entry name" value="SMALL RIBOSOMAL SUBUNIT PROTEIN BS6M"/>
    <property type="match status" value="1"/>
</dbReference>
<dbReference type="Pfam" id="PF01250">
    <property type="entry name" value="Ribosomal_S6"/>
    <property type="match status" value="1"/>
</dbReference>
<dbReference type="SUPFAM" id="SSF54995">
    <property type="entry name" value="Ribosomal protein S6"/>
    <property type="match status" value="1"/>
</dbReference>
<dbReference type="PROSITE" id="PS01048">
    <property type="entry name" value="RIBOSOMAL_S6"/>
    <property type="match status" value="1"/>
</dbReference>
<name>RS6_SYNE7</name>
<protein>
    <recommendedName>
        <fullName evidence="1">Small ribosomal subunit protein bS6</fullName>
    </recommendedName>
    <alternativeName>
        <fullName evidence="2">30S ribosomal protein S6</fullName>
    </alternativeName>
</protein>
<reference key="1">
    <citation type="submission" date="2005-08" db="EMBL/GenBank/DDBJ databases">
        <title>Complete sequence of chromosome 1 of Synechococcus elongatus PCC 7942.</title>
        <authorList>
            <consortium name="US DOE Joint Genome Institute"/>
            <person name="Copeland A."/>
            <person name="Lucas S."/>
            <person name="Lapidus A."/>
            <person name="Barry K."/>
            <person name="Detter J.C."/>
            <person name="Glavina T."/>
            <person name="Hammon N."/>
            <person name="Israni S."/>
            <person name="Pitluck S."/>
            <person name="Schmutz J."/>
            <person name="Larimer F."/>
            <person name="Land M."/>
            <person name="Kyrpides N."/>
            <person name="Lykidis A."/>
            <person name="Golden S."/>
            <person name="Richardson P."/>
        </authorList>
    </citation>
    <scope>NUCLEOTIDE SEQUENCE [LARGE SCALE GENOMIC DNA]</scope>
    <source>
        <strain>ATCC 33912 / PCC 7942 / FACHB-805</strain>
    </source>
</reference>
<comment type="function">
    <text evidence="1">Binds together with bS18 to 16S ribosomal RNA.</text>
</comment>
<comment type="similarity">
    <text evidence="1">Belongs to the bacterial ribosomal protein bS6 family.</text>
</comment>
<gene>
    <name evidence="1" type="primary">rpsF</name>
    <name evidence="1" type="synonym">rps6</name>
    <name type="ordered locus">Synpcc7942_0012</name>
</gene>
<organism>
    <name type="scientific">Synechococcus elongatus (strain ATCC 33912 / PCC 7942 / FACHB-805)</name>
    <name type="common">Anacystis nidulans R2</name>
    <dbReference type="NCBI Taxonomy" id="1140"/>
    <lineage>
        <taxon>Bacteria</taxon>
        <taxon>Bacillati</taxon>
        <taxon>Cyanobacteriota</taxon>
        <taxon>Cyanophyceae</taxon>
        <taxon>Synechococcales</taxon>
        <taxon>Synechococcaceae</taxon>
        <taxon>Synechococcus</taxon>
    </lineage>
</organism>
<feature type="chain" id="PRO_1000005373" description="Small ribosomal subunit protein bS6">
    <location>
        <begin position="1"/>
        <end position="107"/>
    </location>
</feature>
<keyword id="KW-1185">Reference proteome</keyword>
<keyword id="KW-0687">Ribonucleoprotein</keyword>
<keyword id="KW-0689">Ribosomal protein</keyword>
<keyword id="KW-0694">RNA-binding</keyword>
<keyword id="KW-0699">rRNA-binding</keyword>
<sequence>MKDFYYETMYILRADLTEEQVEQAIAKYQTLLTEAGAEVQDTQHRGKRRLAYLINKQREGIYVQINYTGDGSQIAPLERALRLSEEVLRFLTVKQEVRPPAPVAVEA</sequence>
<accession>Q31SC5</accession>
<proteinExistence type="inferred from homology"/>
<evidence type="ECO:0000255" key="1">
    <source>
        <dbReference type="HAMAP-Rule" id="MF_00360"/>
    </source>
</evidence>
<evidence type="ECO:0000305" key="2"/>